<proteinExistence type="inferred from homology"/>
<feature type="chain" id="PRO_0000400308" description="Mycothiol acetyltransferase">
    <location>
        <begin position="1"/>
        <end position="295"/>
    </location>
</feature>
<feature type="domain" description="N-acetyltransferase 1" evidence="1">
    <location>
        <begin position="5"/>
        <end position="141"/>
    </location>
</feature>
<feature type="domain" description="N-acetyltransferase 2" evidence="1">
    <location>
        <begin position="149"/>
        <end position="295"/>
    </location>
</feature>
<feature type="binding site" evidence="1">
    <location>
        <position position="35"/>
    </location>
    <ligand>
        <name>1D-myo-inositol 2-(L-cysteinylamino)-2-deoxy-alpha-D-glucopyranoside</name>
        <dbReference type="ChEBI" id="CHEBI:58887"/>
    </ligand>
</feature>
<feature type="binding site" evidence="1">
    <location>
        <begin position="76"/>
        <end position="78"/>
    </location>
    <ligand>
        <name>acetyl-CoA</name>
        <dbReference type="ChEBI" id="CHEBI:57288"/>
        <label>1</label>
    </ligand>
</feature>
<feature type="binding site" evidence="1">
    <location>
        <position position="176"/>
    </location>
    <ligand>
        <name>1D-myo-inositol 2-(L-cysteinylamino)-2-deoxy-alpha-D-glucopyranoside</name>
        <dbReference type="ChEBI" id="CHEBI:58887"/>
    </ligand>
</feature>
<feature type="binding site" evidence="1">
    <location>
        <position position="215"/>
    </location>
    <ligand>
        <name>1D-myo-inositol 2-(L-cysteinylamino)-2-deoxy-alpha-D-glucopyranoside</name>
        <dbReference type="ChEBI" id="CHEBI:58887"/>
    </ligand>
</feature>
<feature type="binding site" evidence="1">
    <location>
        <position position="229"/>
    </location>
    <ligand>
        <name>1D-myo-inositol 2-(L-cysteinylamino)-2-deoxy-alpha-D-glucopyranoside</name>
        <dbReference type="ChEBI" id="CHEBI:58887"/>
    </ligand>
</feature>
<feature type="binding site" evidence="1">
    <location>
        <begin position="233"/>
        <end position="235"/>
    </location>
    <ligand>
        <name>acetyl-CoA</name>
        <dbReference type="ChEBI" id="CHEBI:57288"/>
        <label>2</label>
    </ligand>
</feature>
<feature type="binding site" evidence="1">
    <location>
        <begin position="240"/>
        <end position="246"/>
    </location>
    <ligand>
        <name>acetyl-CoA</name>
        <dbReference type="ChEBI" id="CHEBI:57288"/>
        <label>2</label>
    </ligand>
</feature>
<feature type="binding site" evidence="1">
    <location>
        <position position="267"/>
    </location>
    <ligand>
        <name>1D-myo-inositol 2-(L-cysteinylamino)-2-deoxy-alpha-D-glucopyranoside</name>
        <dbReference type="ChEBI" id="CHEBI:58887"/>
    </ligand>
</feature>
<feature type="binding site" evidence="1">
    <location>
        <begin position="272"/>
        <end position="277"/>
    </location>
    <ligand>
        <name>acetyl-CoA</name>
        <dbReference type="ChEBI" id="CHEBI:57288"/>
        <label>2</label>
    </ligand>
</feature>
<name>MSHD_THEBD</name>
<dbReference type="EC" id="2.3.1.189" evidence="1"/>
<dbReference type="EMBL" id="CP001874">
    <property type="protein sequence ID" value="ADG87179.1"/>
    <property type="molecule type" value="Genomic_DNA"/>
</dbReference>
<dbReference type="RefSeq" id="WP_013130712.1">
    <property type="nucleotide sequence ID" value="NC_014165.1"/>
</dbReference>
<dbReference type="SMR" id="D6Y4C5"/>
<dbReference type="STRING" id="469371.Tbis_0451"/>
<dbReference type="KEGG" id="tbi:Tbis_0451"/>
<dbReference type="eggNOG" id="COG0456">
    <property type="taxonomic scope" value="Bacteria"/>
</dbReference>
<dbReference type="HOGENOM" id="CLU_068014_0_0_11"/>
<dbReference type="OrthoDB" id="3208058at2"/>
<dbReference type="Proteomes" id="UP000006640">
    <property type="component" value="Chromosome"/>
</dbReference>
<dbReference type="GO" id="GO:0035447">
    <property type="term" value="F:mycothiol synthase activity"/>
    <property type="evidence" value="ECO:0007669"/>
    <property type="project" value="UniProtKB-UniRule"/>
</dbReference>
<dbReference type="GO" id="GO:0010125">
    <property type="term" value="P:mycothiol biosynthetic process"/>
    <property type="evidence" value="ECO:0007669"/>
    <property type="project" value="UniProtKB-UniRule"/>
</dbReference>
<dbReference type="CDD" id="cd04301">
    <property type="entry name" value="NAT_SF"/>
    <property type="match status" value="1"/>
</dbReference>
<dbReference type="Gene3D" id="3.40.630.30">
    <property type="match status" value="1"/>
</dbReference>
<dbReference type="HAMAP" id="MF_01698">
    <property type="entry name" value="MshD"/>
    <property type="match status" value="1"/>
</dbReference>
<dbReference type="InterPro" id="IPR016181">
    <property type="entry name" value="Acyl_CoA_acyltransferase"/>
</dbReference>
<dbReference type="InterPro" id="IPR050832">
    <property type="entry name" value="Bact_Acetyltransf"/>
</dbReference>
<dbReference type="InterPro" id="IPR000182">
    <property type="entry name" value="GNAT_dom"/>
</dbReference>
<dbReference type="InterPro" id="IPR017813">
    <property type="entry name" value="Mycothiol_AcTrfase"/>
</dbReference>
<dbReference type="NCBIfam" id="TIGR03448">
    <property type="entry name" value="mycothiol_MshD"/>
    <property type="match status" value="1"/>
</dbReference>
<dbReference type="PANTHER" id="PTHR43877">
    <property type="entry name" value="AMINOALKYLPHOSPHONATE N-ACETYLTRANSFERASE-RELATED-RELATED"/>
    <property type="match status" value="1"/>
</dbReference>
<dbReference type="Pfam" id="PF00583">
    <property type="entry name" value="Acetyltransf_1"/>
    <property type="match status" value="1"/>
</dbReference>
<dbReference type="Pfam" id="PF13508">
    <property type="entry name" value="Acetyltransf_7"/>
    <property type="match status" value="1"/>
</dbReference>
<dbReference type="PIRSF" id="PIRSF021524">
    <property type="entry name" value="MSH_acetyltransferase"/>
    <property type="match status" value="1"/>
</dbReference>
<dbReference type="SUPFAM" id="SSF55729">
    <property type="entry name" value="Acyl-CoA N-acyltransferases (Nat)"/>
    <property type="match status" value="1"/>
</dbReference>
<dbReference type="PROSITE" id="PS51186">
    <property type="entry name" value="GNAT"/>
    <property type="match status" value="2"/>
</dbReference>
<keyword id="KW-0012">Acyltransferase</keyword>
<keyword id="KW-1185">Reference proteome</keyword>
<keyword id="KW-0677">Repeat</keyword>
<keyword id="KW-0808">Transferase</keyword>
<accession>D6Y4C5</accession>
<evidence type="ECO:0000255" key="1">
    <source>
        <dbReference type="HAMAP-Rule" id="MF_01698"/>
    </source>
</evidence>
<organism>
    <name type="scientific">Thermobispora bispora (strain ATCC 19993 / DSM 43833 / CBS 139.67 / JCM 10125 / KCTC 9307 / NBRC 14880 / R51)</name>
    <dbReference type="NCBI Taxonomy" id="469371"/>
    <lineage>
        <taxon>Bacteria</taxon>
        <taxon>Bacillati</taxon>
        <taxon>Actinomycetota</taxon>
        <taxon>Actinomycetes</taxon>
        <taxon>Streptosporangiales</taxon>
        <taxon>Streptosporangiaceae</taxon>
        <taxon>Thermobispora</taxon>
    </lineage>
</organism>
<gene>
    <name evidence="1" type="primary">mshD</name>
    <name type="ordered locus">Tbis_0451</name>
</gene>
<protein>
    <recommendedName>
        <fullName evidence="1">Mycothiol acetyltransferase</fullName>
        <shortName evidence="1">MSH acetyltransferase</shortName>
        <ecNumber evidence="1">2.3.1.189</ecNumber>
    </recommendedName>
    <alternativeName>
        <fullName evidence="1">Mycothiol synthase</fullName>
    </alternativeName>
</protein>
<comment type="function">
    <text evidence="1">Catalyzes the transfer of acetyl from acetyl-CoA to desacetylmycothiol (Cys-GlcN-Ins) to form mycothiol.</text>
</comment>
<comment type="catalytic activity">
    <reaction evidence="1">
        <text>1D-myo-inositol 2-(L-cysteinylamino)-2-deoxy-alpha-D-glucopyranoside + acetyl-CoA = mycothiol + CoA + H(+)</text>
        <dbReference type="Rhea" id="RHEA:26172"/>
        <dbReference type="ChEBI" id="CHEBI:15378"/>
        <dbReference type="ChEBI" id="CHEBI:16768"/>
        <dbReference type="ChEBI" id="CHEBI:57287"/>
        <dbReference type="ChEBI" id="CHEBI:57288"/>
        <dbReference type="ChEBI" id="CHEBI:58887"/>
        <dbReference type="EC" id="2.3.1.189"/>
    </reaction>
</comment>
<comment type="subunit">
    <text evidence="1">Monomer.</text>
</comment>
<comment type="similarity">
    <text evidence="1">Belongs to the acetyltransferase family. MshD subfamily.</text>
</comment>
<sequence>MTVRVEIRETPGDQEAVLALAEAAAEADGVRPLNEQTLLALRYGGPSGARFLLLYDGDELAGFAYLEPSDPPSGELVVHPGFRGRGLGGRLLAAVLDTGGKGVRLWAHGDLPAAARLAAGFGMTRARALWRMRRPLTTPLPAPELPEGVRLRTFEPGRDEEAWLALNARAFADHPEQGSWTLEDLKRRQQEPWFDPAGFFLAERAGTLVGFHWTKVHAQAEGADGPIGEVYVVGVDPEERGTGLGRALTLAGLAHLRSRGLDQVMLYVDEANTAAVRLYESLGFTRWTVDVMYRR</sequence>
<reference key="1">
    <citation type="journal article" date="2010" name="Stand. Genomic Sci.">
        <title>Complete genome sequence of Thermobispora bispora type strain (R51).</title>
        <authorList>
            <person name="Liolios K."/>
            <person name="Sikorski J."/>
            <person name="Jando M."/>
            <person name="Lapidus A."/>
            <person name="Copeland A."/>
            <person name="Glavina del Rio T."/>
            <person name="Nolan M."/>
            <person name="Lucas S."/>
            <person name="Tice H."/>
            <person name="Cheng J.F."/>
            <person name="Han C."/>
            <person name="Woyke T."/>
            <person name="Goodwin L."/>
            <person name="Pitluck S."/>
            <person name="Ivanova N."/>
            <person name="Mavromatis K."/>
            <person name="Mikhailova N."/>
            <person name="Chertkov O."/>
            <person name="Kuske C."/>
            <person name="Chen A."/>
            <person name="Palaniappan K."/>
            <person name="Land M."/>
            <person name="Hauser L."/>
            <person name="Chang Y.J."/>
            <person name="Jeffries C.D."/>
            <person name="Detter J.C."/>
            <person name="Brettin T."/>
            <person name="Rohde M."/>
            <person name="Goeker M."/>
            <person name="Bristow J."/>
            <person name="Eisen J.A."/>
            <person name="Markowitz V."/>
            <person name="Hugenholtz P."/>
            <person name="Klenk H.P."/>
            <person name="Kyrpides N.C."/>
        </authorList>
    </citation>
    <scope>NUCLEOTIDE SEQUENCE [LARGE SCALE GENOMIC DNA]</scope>
    <source>
        <strain>ATCC 19993 / DSM 43833 / CBS 139.67 / JCM 10125 / KCTC 9307 / NBRC 14880 / R51</strain>
    </source>
</reference>